<keyword id="KW-0067">ATP-binding</keyword>
<keyword id="KW-0963">Cytoplasm</keyword>
<keyword id="KW-0418">Kinase</keyword>
<keyword id="KW-0547">Nucleotide-binding</keyword>
<keyword id="KW-0808">Transferase</keyword>
<proteinExistence type="inferred from homology"/>
<evidence type="ECO:0000255" key="1">
    <source>
        <dbReference type="HAMAP-Rule" id="MF_00328"/>
    </source>
</evidence>
<sequence length="205" mass="23109">MSVKVISPFSQDGVQCFPKLFIISAPAGAGKTTLTHMLQREFPDAFEKTVSSTTRSARPGEVHGVDYLFVSEDDFKQSLDREDFLEWVFLFGTYYGTSKAEISRVLQKGKHCIAVIDVQGALALKKQMPAVTIFIQAPSQEELERRLNARDSEKDFQKKERLEHSAVEIAAASEFDYVVVNDDLITAYQVLRSIFIAEEHRMSHG</sequence>
<feature type="chain" id="PRO_0000266302" description="Guanylate kinase">
    <location>
        <begin position="1"/>
        <end position="205"/>
    </location>
</feature>
<feature type="domain" description="Guanylate kinase-like" evidence="1">
    <location>
        <begin position="18"/>
        <end position="196"/>
    </location>
</feature>
<feature type="binding site" evidence="1">
    <location>
        <begin position="25"/>
        <end position="32"/>
    </location>
    <ligand>
        <name>ATP</name>
        <dbReference type="ChEBI" id="CHEBI:30616"/>
    </ligand>
</feature>
<accession>Q3KMZ2</accession>
<dbReference type="EC" id="2.7.4.8" evidence="1"/>
<dbReference type="EMBL" id="CP000051">
    <property type="protein sequence ID" value="AAX50280.1"/>
    <property type="molecule type" value="Genomic_DNA"/>
</dbReference>
<dbReference type="RefSeq" id="WP_009871377.1">
    <property type="nucleotide sequence ID" value="NC_007429.1"/>
</dbReference>
<dbReference type="SMR" id="Q3KMZ2"/>
<dbReference type="KEGG" id="cta:CTA_0032"/>
<dbReference type="HOGENOM" id="CLU_001715_1_1_0"/>
<dbReference type="Proteomes" id="UP000002532">
    <property type="component" value="Chromosome"/>
</dbReference>
<dbReference type="GO" id="GO:0005829">
    <property type="term" value="C:cytosol"/>
    <property type="evidence" value="ECO:0007669"/>
    <property type="project" value="TreeGrafter"/>
</dbReference>
<dbReference type="GO" id="GO:0005524">
    <property type="term" value="F:ATP binding"/>
    <property type="evidence" value="ECO:0007669"/>
    <property type="project" value="UniProtKB-UniRule"/>
</dbReference>
<dbReference type="GO" id="GO:0004385">
    <property type="term" value="F:guanylate kinase activity"/>
    <property type="evidence" value="ECO:0007669"/>
    <property type="project" value="UniProtKB-UniRule"/>
</dbReference>
<dbReference type="CDD" id="cd00071">
    <property type="entry name" value="GMPK"/>
    <property type="match status" value="1"/>
</dbReference>
<dbReference type="FunFam" id="3.30.63.10:FF:000005">
    <property type="entry name" value="Guanylate kinase"/>
    <property type="match status" value="1"/>
</dbReference>
<dbReference type="Gene3D" id="3.30.63.10">
    <property type="entry name" value="Guanylate Kinase phosphate binding domain"/>
    <property type="match status" value="1"/>
</dbReference>
<dbReference type="Gene3D" id="3.40.50.300">
    <property type="entry name" value="P-loop containing nucleotide triphosphate hydrolases"/>
    <property type="match status" value="1"/>
</dbReference>
<dbReference type="HAMAP" id="MF_00328">
    <property type="entry name" value="Guanylate_kinase"/>
    <property type="match status" value="1"/>
</dbReference>
<dbReference type="InterPro" id="IPR008145">
    <property type="entry name" value="GK/Ca_channel_bsu"/>
</dbReference>
<dbReference type="InterPro" id="IPR008144">
    <property type="entry name" value="Guanylate_kin-like_dom"/>
</dbReference>
<dbReference type="InterPro" id="IPR017665">
    <property type="entry name" value="Guanylate_kinase"/>
</dbReference>
<dbReference type="InterPro" id="IPR020590">
    <property type="entry name" value="Guanylate_kinase_CS"/>
</dbReference>
<dbReference type="InterPro" id="IPR027417">
    <property type="entry name" value="P-loop_NTPase"/>
</dbReference>
<dbReference type="NCBIfam" id="TIGR03263">
    <property type="entry name" value="guanyl_kin"/>
    <property type="match status" value="1"/>
</dbReference>
<dbReference type="PANTHER" id="PTHR23117:SF13">
    <property type="entry name" value="GUANYLATE KINASE"/>
    <property type="match status" value="1"/>
</dbReference>
<dbReference type="PANTHER" id="PTHR23117">
    <property type="entry name" value="GUANYLATE KINASE-RELATED"/>
    <property type="match status" value="1"/>
</dbReference>
<dbReference type="Pfam" id="PF00625">
    <property type="entry name" value="Guanylate_kin"/>
    <property type="match status" value="1"/>
</dbReference>
<dbReference type="SMART" id="SM00072">
    <property type="entry name" value="GuKc"/>
    <property type="match status" value="1"/>
</dbReference>
<dbReference type="SUPFAM" id="SSF52540">
    <property type="entry name" value="P-loop containing nucleoside triphosphate hydrolases"/>
    <property type="match status" value="1"/>
</dbReference>
<dbReference type="PROSITE" id="PS00856">
    <property type="entry name" value="GUANYLATE_KINASE_1"/>
    <property type="match status" value="1"/>
</dbReference>
<dbReference type="PROSITE" id="PS50052">
    <property type="entry name" value="GUANYLATE_KINASE_2"/>
    <property type="match status" value="1"/>
</dbReference>
<organism>
    <name type="scientific">Chlamydia trachomatis serovar A (strain ATCC VR-571B / DSM 19440 / HAR-13)</name>
    <dbReference type="NCBI Taxonomy" id="315277"/>
    <lineage>
        <taxon>Bacteria</taxon>
        <taxon>Pseudomonadati</taxon>
        <taxon>Chlamydiota</taxon>
        <taxon>Chlamydiia</taxon>
        <taxon>Chlamydiales</taxon>
        <taxon>Chlamydiaceae</taxon>
        <taxon>Chlamydia/Chlamydophila group</taxon>
        <taxon>Chlamydia</taxon>
    </lineage>
</organism>
<protein>
    <recommendedName>
        <fullName evidence="1">Guanylate kinase</fullName>
        <ecNumber evidence="1">2.7.4.8</ecNumber>
    </recommendedName>
    <alternativeName>
        <fullName evidence="1">GMP kinase</fullName>
    </alternativeName>
</protein>
<reference key="1">
    <citation type="journal article" date="2005" name="Infect. Immun.">
        <title>Comparative genomic analysis of Chlamydia trachomatis oculotropic and genitotropic strains.</title>
        <authorList>
            <person name="Carlson J.H."/>
            <person name="Porcella S.F."/>
            <person name="McClarty G."/>
            <person name="Caldwell H.D."/>
        </authorList>
    </citation>
    <scope>NUCLEOTIDE SEQUENCE [LARGE SCALE GENOMIC DNA]</scope>
    <source>
        <strain>ATCC VR-571B / DSM 19440 / HAR-13</strain>
    </source>
</reference>
<gene>
    <name evidence="1" type="primary">gmk</name>
    <name type="ordered locus">CTA_0032</name>
</gene>
<name>KGUA_CHLTA</name>
<comment type="function">
    <text evidence="1">Essential for recycling GMP and indirectly, cGMP.</text>
</comment>
<comment type="catalytic activity">
    <reaction evidence="1">
        <text>GMP + ATP = GDP + ADP</text>
        <dbReference type="Rhea" id="RHEA:20780"/>
        <dbReference type="ChEBI" id="CHEBI:30616"/>
        <dbReference type="ChEBI" id="CHEBI:58115"/>
        <dbReference type="ChEBI" id="CHEBI:58189"/>
        <dbReference type="ChEBI" id="CHEBI:456216"/>
        <dbReference type="EC" id="2.7.4.8"/>
    </reaction>
</comment>
<comment type="subcellular location">
    <subcellularLocation>
        <location evidence="1">Cytoplasm</location>
    </subcellularLocation>
</comment>
<comment type="similarity">
    <text evidence="1">Belongs to the guanylate kinase family.</text>
</comment>